<reference key="1">
    <citation type="journal article" date="2002" name="Nucleic Acids Res.">
        <title>Genome sequence of Shigella flexneri 2a: insights into pathogenicity through comparison with genomes of Escherichia coli K12 and O157.</title>
        <authorList>
            <person name="Jin Q."/>
            <person name="Yuan Z."/>
            <person name="Xu J."/>
            <person name="Wang Y."/>
            <person name="Shen Y."/>
            <person name="Lu W."/>
            <person name="Wang J."/>
            <person name="Liu H."/>
            <person name="Yang J."/>
            <person name="Yang F."/>
            <person name="Zhang X."/>
            <person name="Zhang J."/>
            <person name="Yang G."/>
            <person name="Wu H."/>
            <person name="Qu D."/>
            <person name="Dong J."/>
            <person name="Sun L."/>
            <person name="Xue Y."/>
            <person name="Zhao A."/>
            <person name="Gao Y."/>
            <person name="Zhu J."/>
            <person name="Kan B."/>
            <person name="Ding K."/>
            <person name="Chen S."/>
            <person name="Cheng H."/>
            <person name="Yao Z."/>
            <person name="He B."/>
            <person name="Chen R."/>
            <person name="Ma D."/>
            <person name="Qiang B."/>
            <person name="Wen Y."/>
            <person name="Hou Y."/>
            <person name="Yu J."/>
        </authorList>
    </citation>
    <scope>NUCLEOTIDE SEQUENCE [LARGE SCALE GENOMIC DNA]</scope>
    <source>
        <strain>301 / Serotype 2a</strain>
    </source>
</reference>
<reference key="2">
    <citation type="journal article" date="2003" name="Infect. Immun.">
        <title>Complete genome sequence and comparative genomics of Shigella flexneri serotype 2a strain 2457T.</title>
        <authorList>
            <person name="Wei J."/>
            <person name="Goldberg M.B."/>
            <person name="Burland V."/>
            <person name="Venkatesan M.M."/>
            <person name="Deng W."/>
            <person name="Fournier G."/>
            <person name="Mayhew G.F."/>
            <person name="Plunkett G. III"/>
            <person name="Rose D.J."/>
            <person name="Darling A."/>
            <person name="Mau B."/>
            <person name="Perna N.T."/>
            <person name="Payne S.M."/>
            <person name="Runyen-Janecky L.J."/>
            <person name="Zhou S."/>
            <person name="Schwartz D.C."/>
            <person name="Blattner F.R."/>
        </authorList>
    </citation>
    <scope>NUCLEOTIDE SEQUENCE [LARGE SCALE GENOMIC DNA]</scope>
    <source>
        <strain>ATCC 700930 / 2457T / Serotype 2a</strain>
    </source>
</reference>
<name>LEU3_SHIFL</name>
<proteinExistence type="inferred from homology"/>
<feature type="initiator methionine" description="Removed" evidence="1">
    <location>
        <position position="1"/>
    </location>
</feature>
<feature type="chain" id="PRO_0000083747" description="3-isopropylmalate dehydrogenase">
    <location>
        <begin position="2"/>
        <end position="363"/>
    </location>
</feature>
<feature type="binding site" evidence="2">
    <location>
        <begin position="78"/>
        <end position="91"/>
    </location>
    <ligand>
        <name>NAD(+)</name>
        <dbReference type="ChEBI" id="CHEBI:57540"/>
    </ligand>
</feature>
<feature type="binding site" evidence="2">
    <location>
        <position position="99"/>
    </location>
    <ligand>
        <name>substrate</name>
    </ligand>
</feature>
<feature type="binding site" evidence="2">
    <location>
        <position position="109"/>
    </location>
    <ligand>
        <name>substrate</name>
    </ligand>
</feature>
<feature type="binding site" evidence="2">
    <location>
        <position position="138"/>
    </location>
    <ligand>
        <name>substrate</name>
    </ligand>
</feature>
<feature type="binding site" evidence="2">
    <location>
        <position position="227"/>
    </location>
    <ligand>
        <name>Mg(2+)</name>
        <dbReference type="ChEBI" id="CHEBI:18420"/>
    </ligand>
</feature>
<feature type="binding site" evidence="2">
    <location>
        <position position="227"/>
    </location>
    <ligand>
        <name>substrate</name>
    </ligand>
</feature>
<feature type="binding site" evidence="2">
    <location>
        <position position="251"/>
    </location>
    <ligand>
        <name>Mg(2+)</name>
        <dbReference type="ChEBI" id="CHEBI:18420"/>
    </ligand>
</feature>
<feature type="binding site" evidence="2">
    <location>
        <position position="255"/>
    </location>
    <ligand>
        <name>Mg(2+)</name>
        <dbReference type="ChEBI" id="CHEBI:18420"/>
    </ligand>
</feature>
<feature type="binding site" evidence="2">
    <location>
        <begin position="285"/>
        <end position="297"/>
    </location>
    <ligand>
        <name>NAD(+)</name>
        <dbReference type="ChEBI" id="CHEBI:57540"/>
    </ligand>
</feature>
<feature type="site" description="Important for catalysis" evidence="2">
    <location>
        <position position="145"/>
    </location>
</feature>
<feature type="site" description="Important for catalysis" evidence="2">
    <location>
        <position position="195"/>
    </location>
</feature>
<protein>
    <recommendedName>
        <fullName evidence="2">3-isopropylmalate dehydrogenase</fullName>
        <ecNumber evidence="2">1.1.1.85</ecNumber>
    </recommendedName>
    <alternativeName>
        <fullName evidence="2">3-IPM-DH</fullName>
    </alternativeName>
    <alternativeName>
        <fullName evidence="2">Beta-IPM dehydrogenase</fullName>
        <shortName evidence="2">IMDH</shortName>
    </alternativeName>
</protein>
<evidence type="ECO:0000250" key="1"/>
<evidence type="ECO:0000255" key="2">
    <source>
        <dbReference type="HAMAP-Rule" id="MF_01033"/>
    </source>
</evidence>
<evidence type="ECO:0000305" key="3"/>
<comment type="function">
    <text evidence="2">Catalyzes the oxidation of 3-carboxy-2-hydroxy-4-methylpentanoate (3-isopropylmalate) to 3-carboxy-4-methyl-2-oxopentanoate. The product decarboxylates to 4-methyl-2 oxopentanoate.</text>
</comment>
<comment type="catalytic activity">
    <reaction evidence="2">
        <text>(2R,3S)-3-isopropylmalate + NAD(+) = 4-methyl-2-oxopentanoate + CO2 + NADH</text>
        <dbReference type="Rhea" id="RHEA:32271"/>
        <dbReference type="ChEBI" id="CHEBI:16526"/>
        <dbReference type="ChEBI" id="CHEBI:17865"/>
        <dbReference type="ChEBI" id="CHEBI:35121"/>
        <dbReference type="ChEBI" id="CHEBI:57540"/>
        <dbReference type="ChEBI" id="CHEBI:57945"/>
        <dbReference type="EC" id="1.1.1.85"/>
    </reaction>
</comment>
<comment type="cofactor">
    <cofactor evidence="2">
        <name>Mg(2+)</name>
        <dbReference type="ChEBI" id="CHEBI:18420"/>
    </cofactor>
    <cofactor evidence="2">
        <name>Mn(2+)</name>
        <dbReference type="ChEBI" id="CHEBI:29035"/>
    </cofactor>
    <text evidence="2">Binds 1 Mg(2+) or Mn(2+) ion per subunit.</text>
</comment>
<comment type="pathway">
    <text evidence="2">Amino-acid biosynthesis; L-leucine biosynthesis; L-leucine from 3-methyl-2-oxobutanoate: step 3/4.</text>
</comment>
<comment type="subunit">
    <text evidence="2">Homodimer.</text>
</comment>
<comment type="subcellular location">
    <subcellularLocation>
        <location evidence="2">Cytoplasm</location>
    </subcellularLocation>
</comment>
<comment type="similarity">
    <text evidence="2">Belongs to the isocitrate and isopropylmalate dehydrogenases family. LeuB type 1 subfamily.</text>
</comment>
<comment type="sequence caution" evidence="3">
    <conflict type="erroneous initiation">
        <sequence resource="EMBL-CDS" id="AAN41733"/>
    </conflict>
</comment>
<comment type="sequence caution" evidence="3">
    <conflict type="erroneous initiation">
        <sequence resource="EMBL-CDS" id="AAP15614"/>
    </conflict>
</comment>
<organism>
    <name type="scientific">Shigella flexneri</name>
    <dbReference type="NCBI Taxonomy" id="623"/>
    <lineage>
        <taxon>Bacteria</taxon>
        <taxon>Pseudomonadati</taxon>
        <taxon>Pseudomonadota</taxon>
        <taxon>Gammaproteobacteria</taxon>
        <taxon>Enterobacterales</taxon>
        <taxon>Enterobacteriaceae</taxon>
        <taxon>Shigella</taxon>
    </lineage>
</organism>
<dbReference type="EC" id="1.1.1.85" evidence="2"/>
<dbReference type="EMBL" id="AE005674">
    <property type="protein sequence ID" value="AAN41733.1"/>
    <property type="status" value="ALT_INIT"/>
    <property type="molecule type" value="Genomic_DNA"/>
</dbReference>
<dbReference type="EMBL" id="AE014073">
    <property type="protein sequence ID" value="AAP15614.1"/>
    <property type="status" value="ALT_INIT"/>
    <property type="molecule type" value="Genomic_DNA"/>
</dbReference>
<dbReference type="RefSeq" id="NP_706026.3">
    <property type="nucleotide sequence ID" value="NC_004337.2"/>
</dbReference>
<dbReference type="RefSeq" id="WP_000042384.1">
    <property type="nucleotide sequence ID" value="NZ_WPGW01000005.1"/>
</dbReference>
<dbReference type="SMR" id="Q83SP1"/>
<dbReference type="STRING" id="198214.SF0068"/>
<dbReference type="PaxDb" id="198214-SF0068"/>
<dbReference type="GeneID" id="1024533"/>
<dbReference type="KEGG" id="sfl:SF0068"/>
<dbReference type="KEGG" id="sfx:S0070"/>
<dbReference type="PATRIC" id="fig|198214.7.peg.80"/>
<dbReference type="HOGENOM" id="CLU_031953_0_3_6"/>
<dbReference type="UniPathway" id="UPA00048">
    <property type="reaction ID" value="UER00072"/>
</dbReference>
<dbReference type="Proteomes" id="UP000001006">
    <property type="component" value="Chromosome"/>
</dbReference>
<dbReference type="Proteomes" id="UP000002673">
    <property type="component" value="Chromosome"/>
</dbReference>
<dbReference type="GO" id="GO:0005829">
    <property type="term" value="C:cytosol"/>
    <property type="evidence" value="ECO:0007669"/>
    <property type="project" value="TreeGrafter"/>
</dbReference>
<dbReference type="GO" id="GO:0003862">
    <property type="term" value="F:3-isopropylmalate dehydrogenase activity"/>
    <property type="evidence" value="ECO:0007669"/>
    <property type="project" value="UniProtKB-UniRule"/>
</dbReference>
<dbReference type="GO" id="GO:0000287">
    <property type="term" value="F:magnesium ion binding"/>
    <property type="evidence" value="ECO:0007669"/>
    <property type="project" value="InterPro"/>
</dbReference>
<dbReference type="GO" id="GO:0051287">
    <property type="term" value="F:NAD binding"/>
    <property type="evidence" value="ECO:0007669"/>
    <property type="project" value="InterPro"/>
</dbReference>
<dbReference type="GO" id="GO:0009098">
    <property type="term" value="P:L-leucine biosynthetic process"/>
    <property type="evidence" value="ECO:0007669"/>
    <property type="project" value="UniProtKB-UniRule"/>
</dbReference>
<dbReference type="FunFam" id="3.40.718.10:FF:000004">
    <property type="entry name" value="3-isopropylmalate dehydrogenase"/>
    <property type="match status" value="1"/>
</dbReference>
<dbReference type="Gene3D" id="3.40.718.10">
    <property type="entry name" value="Isopropylmalate Dehydrogenase"/>
    <property type="match status" value="1"/>
</dbReference>
<dbReference type="HAMAP" id="MF_01033">
    <property type="entry name" value="LeuB_type1"/>
    <property type="match status" value="1"/>
</dbReference>
<dbReference type="InterPro" id="IPR019818">
    <property type="entry name" value="IsoCit/isopropylmalate_DH_CS"/>
</dbReference>
<dbReference type="InterPro" id="IPR024084">
    <property type="entry name" value="IsoPropMal-DH-like_dom"/>
</dbReference>
<dbReference type="InterPro" id="IPR004429">
    <property type="entry name" value="Isopropylmalate_DH"/>
</dbReference>
<dbReference type="NCBIfam" id="TIGR00169">
    <property type="entry name" value="leuB"/>
    <property type="match status" value="1"/>
</dbReference>
<dbReference type="PANTHER" id="PTHR42979">
    <property type="entry name" value="3-ISOPROPYLMALATE DEHYDROGENASE"/>
    <property type="match status" value="1"/>
</dbReference>
<dbReference type="PANTHER" id="PTHR42979:SF1">
    <property type="entry name" value="3-ISOPROPYLMALATE DEHYDROGENASE"/>
    <property type="match status" value="1"/>
</dbReference>
<dbReference type="Pfam" id="PF00180">
    <property type="entry name" value="Iso_dh"/>
    <property type="match status" value="1"/>
</dbReference>
<dbReference type="SMART" id="SM01329">
    <property type="entry name" value="Iso_dh"/>
    <property type="match status" value="1"/>
</dbReference>
<dbReference type="SUPFAM" id="SSF53659">
    <property type="entry name" value="Isocitrate/Isopropylmalate dehydrogenase-like"/>
    <property type="match status" value="1"/>
</dbReference>
<dbReference type="PROSITE" id="PS00470">
    <property type="entry name" value="IDH_IMDH"/>
    <property type="match status" value="1"/>
</dbReference>
<keyword id="KW-0028">Amino-acid biosynthesis</keyword>
<keyword id="KW-0100">Branched-chain amino acid biosynthesis</keyword>
<keyword id="KW-0963">Cytoplasm</keyword>
<keyword id="KW-0432">Leucine biosynthesis</keyword>
<keyword id="KW-0460">Magnesium</keyword>
<keyword id="KW-0464">Manganese</keyword>
<keyword id="KW-0479">Metal-binding</keyword>
<keyword id="KW-0520">NAD</keyword>
<keyword id="KW-0560">Oxidoreductase</keyword>
<keyword id="KW-1185">Reference proteome</keyword>
<gene>
    <name evidence="2" type="primary">leuB</name>
    <name type="ordered locus">SF0068</name>
    <name type="ordered locus">S0070</name>
</gene>
<accession>Q83SP1</accession>
<sequence length="363" mass="39515">MSKNYHIAVLPGDGIGPEVMTQALKVLNAVRNRFAMRITTSHYDVGGAAIDNHGQPLPPATVEGCEQADAVLFGSVGGPKWEHLPPDQQPERGALLPLRKHFKLFSNLRPAKLYQGLEAFCPLRADIAANGFDIQCVRELTGGIYFGQPKGREGSGQYEKAFDTEVYHRFEIERIARIAFESARKRRHKVTSIDKANVLQSSILWREIVNEIATEYPDVELAHMYIDNATMQLIKDPSQFDVLLCSNLFGDILSDECAMITGSMGMLPSASLNEQGFGLYEPAGGSAPDIAGKNIANPIAQILSLALLLRYSLDADDAASAIERAINRALEEGIRTGDLARGAAAVSTDEMGDIIARYVAEGV</sequence>